<feature type="chain" id="PRO_0000346588" description="Urease accessory protein UreD 1">
    <location>
        <begin position="1"/>
        <end position="285"/>
    </location>
</feature>
<evidence type="ECO:0000255" key="1">
    <source>
        <dbReference type="HAMAP-Rule" id="MF_01384"/>
    </source>
</evidence>
<reference key="1">
    <citation type="journal article" date="2005" name="Proc. Natl. Acad. Sci. U.S.A.">
        <title>Comparison of the complete genome sequences of Pseudomonas syringae pv. syringae B728a and pv. tomato DC3000.</title>
        <authorList>
            <person name="Feil H."/>
            <person name="Feil W.S."/>
            <person name="Chain P."/>
            <person name="Larimer F."/>
            <person name="Dibartolo G."/>
            <person name="Copeland A."/>
            <person name="Lykidis A."/>
            <person name="Trong S."/>
            <person name="Nolan M."/>
            <person name="Goltsman E."/>
            <person name="Thiel J."/>
            <person name="Malfatti S."/>
            <person name="Loper J.E."/>
            <person name="Lapidus A."/>
            <person name="Detter J.C."/>
            <person name="Land M."/>
            <person name="Richardson P.M."/>
            <person name="Kyrpides N.C."/>
            <person name="Ivanova N."/>
            <person name="Lindow S.E."/>
        </authorList>
    </citation>
    <scope>NUCLEOTIDE SEQUENCE [LARGE SCALE GENOMIC DNA]</scope>
    <source>
        <strain>B728a</strain>
    </source>
</reference>
<name>URED1_PSEU2</name>
<proteinExistence type="inferred from homology"/>
<gene>
    <name evidence="1" type="primary">ureD1</name>
    <name type="ordered locus">Psyr_2195</name>
</gene>
<keyword id="KW-0143">Chaperone</keyword>
<keyword id="KW-0963">Cytoplasm</keyword>
<keyword id="KW-0996">Nickel insertion</keyword>
<accession>Q4ZUD4</accession>
<dbReference type="EMBL" id="CP000075">
    <property type="protein sequence ID" value="AAY37238.1"/>
    <property type="molecule type" value="Genomic_DNA"/>
</dbReference>
<dbReference type="RefSeq" id="WP_011267495.1">
    <property type="nucleotide sequence ID" value="NC_007005.1"/>
</dbReference>
<dbReference type="RefSeq" id="YP_235276.1">
    <property type="nucleotide sequence ID" value="NC_007005.1"/>
</dbReference>
<dbReference type="SMR" id="Q4ZUD4"/>
<dbReference type="STRING" id="205918.Psyr_2195"/>
<dbReference type="KEGG" id="psb:Psyr_2195"/>
<dbReference type="PATRIC" id="fig|205918.7.peg.2246"/>
<dbReference type="eggNOG" id="COG0829">
    <property type="taxonomic scope" value="Bacteria"/>
</dbReference>
<dbReference type="HOGENOM" id="CLU_056339_1_0_6"/>
<dbReference type="OrthoDB" id="9807968at2"/>
<dbReference type="Proteomes" id="UP000000426">
    <property type="component" value="Chromosome"/>
</dbReference>
<dbReference type="GO" id="GO:0005737">
    <property type="term" value="C:cytoplasm"/>
    <property type="evidence" value="ECO:0007669"/>
    <property type="project" value="UniProtKB-SubCell"/>
</dbReference>
<dbReference type="GO" id="GO:0016151">
    <property type="term" value="F:nickel cation binding"/>
    <property type="evidence" value="ECO:0007669"/>
    <property type="project" value="UniProtKB-UniRule"/>
</dbReference>
<dbReference type="HAMAP" id="MF_01384">
    <property type="entry name" value="UreD"/>
    <property type="match status" value="1"/>
</dbReference>
<dbReference type="InterPro" id="IPR002669">
    <property type="entry name" value="UreD"/>
</dbReference>
<dbReference type="PANTHER" id="PTHR33643">
    <property type="entry name" value="UREASE ACCESSORY PROTEIN D"/>
    <property type="match status" value="1"/>
</dbReference>
<dbReference type="PANTHER" id="PTHR33643:SF1">
    <property type="entry name" value="UREASE ACCESSORY PROTEIN D"/>
    <property type="match status" value="1"/>
</dbReference>
<dbReference type="Pfam" id="PF01774">
    <property type="entry name" value="UreD"/>
    <property type="match status" value="1"/>
</dbReference>
<organism>
    <name type="scientific">Pseudomonas syringae pv. syringae (strain B728a)</name>
    <dbReference type="NCBI Taxonomy" id="205918"/>
    <lineage>
        <taxon>Bacteria</taxon>
        <taxon>Pseudomonadati</taxon>
        <taxon>Pseudomonadota</taxon>
        <taxon>Gammaproteobacteria</taxon>
        <taxon>Pseudomonadales</taxon>
        <taxon>Pseudomonadaceae</taxon>
        <taxon>Pseudomonas</taxon>
        <taxon>Pseudomonas syringae</taxon>
    </lineage>
</organism>
<sequence length="285" mass="30575">MNAHQSSLPAQTKRTAHIAFSKAPSGASYVSRQEVGYPFHLGRTLTLPQDPPGMAAVYLQSCSGGLFAGEQLHLHLHAGPGTQVHVSTGAATVAHSMLEQSARQTVTLVAEADALLEYLPMATILFPQTRLHSQVNVTLHPGARVLLCDAFCLHTPHGSEGLPDFYRADLQVYSPAGKLLAGDRLAITGADLQRRLPGVSGQRQALATFMLVGQGLPIEDLKRTLRETLRDVADSYQGVSALPNDCGVSVRVMSADAVALRNALHLAWACVRQQLTGLAPRVRRK</sequence>
<protein>
    <recommendedName>
        <fullName evidence="1">Urease accessory protein UreD 1</fullName>
    </recommendedName>
</protein>
<comment type="function">
    <text evidence="1">Required for maturation of urease via the functional incorporation of the urease nickel metallocenter.</text>
</comment>
<comment type="subunit">
    <text evidence="1">UreD, UreF and UreG form a complex that acts as a GTP-hydrolysis-dependent molecular chaperone, activating the urease apoprotein by helping to assemble the nickel containing metallocenter of UreC. The UreE protein probably delivers the nickel.</text>
</comment>
<comment type="subcellular location">
    <subcellularLocation>
        <location evidence="1">Cytoplasm</location>
    </subcellularLocation>
</comment>
<comment type="similarity">
    <text evidence="1">Belongs to the UreD family.</text>
</comment>